<evidence type="ECO:0000250" key="1"/>
<evidence type="ECO:0000255" key="2"/>
<evidence type="ECO:0000256" key="3">
    <source>
        <dbReference type="SAM" id="MobiDB-lite"/>
    </source>
</evidence>
<evidence type="ECO:0000305" key="4"/>
<feature type="chain" id="PRO_0000124543" description="Autophagy-related protein 11">
    <location>
        <begin position="1"/>
        <end position="1264"/>
    </location>
</feature>
<feature type="region of interest" description="Disordered" evidence="3">
    <location>
        <begin position="528"/>
        <end position="567"/>
    </location>
</feature>
<feature type="region of interest" description="Disordered" evidence="3">
    <location>
        <begin position="1118"/>
        <end position="1140"/>
    </location>
</feature>
<feature type="region of interest" description="Disordered" evidence="3">
    <location>
        <begin position="1180"/>
        <end position="1264"/>
    </location>
</feature>
<feature type="coiled-coil region" evidence="2">
    <location>
        <begin position="566"/>
        <end position="887"/>
    </location>
</feature>
<feature type="compositionally biased region" description="Low complexity" evidence="3">
    <location>
        <begin position="551"/>
        <end position="564"/>
    </location>
</feature>
<feature type="compositionally biased region" description="Polar residues" evidence="3">
    <location>
        <begin position="1190"/>
        <end position="1201"/>
    </location>
</feature>
<feature type="compositionally biased region" description="Polar residues" evidence="3">
    <location>
        <begin position="1240"/>
        <end position="1250"/>
    </location>
</feature>
<feature type="compositionally biased region" description="Basic and acidic residues" evidence="3">
    <location>
        <begin position="1254"/>
        <end position="1264"/>
    </location>
</feature>
<protein>
    <recommendedName>
        <fullName>Autophagy-related protein 11</fullName>
    </recommendedName>
</protein>
<organism>
    <name type="scientific">Aspergillus fumigatus (strain ATCC MYA-4609 / CBS 101355 / FGSC A1100 / Af293)</name>
    <name type="common">Neosartorya fumigata</name>
    <dbReference type="NCBI Taxonomy" id="330879"/>
    <lineage>
        <taxon>Eukaryota</taxon>
        <taxon>Fungi</taxon>
        <taxon>Dikarya</taxon>
        <taxon>Ascomycota</taxon>
        <taxon>Pezizomycotina</taxon>
        <taxon>Eurotiomycetes</taxon>
        <taxon>Eurotiomycetidae</taxon>
        <taxon>Eurotiales</taxon>
        <taxon>Aspergillaceae</taxon>
        <taxon>Aspergillus</taxon>
        <taxon>Aspergillus subgen. Fumigati</taxon>
    </lineage>
</organism>
<reference key="1">
    <citation type="journal article" date="2005" name="Nature">
        <title>Genomic sequence of the pathogenic and allergenic filamentous fungus Aspergillus fumigatus.</title>
        <authorList>
            <person name="Nierman W.C."/>
            <person name="Pain A."/>
            <person name="Anderson M.J."/>
            <person name="Wortman J.R."/>
            <person name="Kim H.S."/>
            <person name="Arroyo J."/>
            <person name="Berriman M."/>
            <person name="Abe K."/>
            <person name="Archer D.B."/>
            <person name="Bermejo C."/>
            <person name="Bennett J.W."/>
            <person name="Bowyer P."/>
            <person name="Chen D."/>
            <person name="Collins M."/>
            <person name="Coulsen R."/>
            <person name="Davies R."/>
            <person name="Dyer P.S."/>
            <person name="Farman M.L."/>
            <person name="Fedorova N."/>
            <person name="Fedorova N.D."/>
            <person name="Feldblyum T.V."/>
            <person name="Fischer R."/>
            <person name="Fosker N."/>
            <person name="Fraser A."/>
            <person name="Garcia J.L."/>
            <person name="Garcia M.J."/>
            <person name="Goble A."/>
            <person name="Goldman G.H."/>
            <person name="Gomi K."/>
            <person name="Griffith-Jones S."/>
            <person name="Gwilliam R."/>
            <person name="Haas B.J."/>
            <person name="Haas H."/>
            <person name="Harris D.E."/>
            <person name="Horiuchi H."/>
            <person name="Huang J."/>
            <person name="Humphray S."/>
            <person name="Jimenez J."/>
            <person name="Keller N."/>
            <person name="Khouri H."/>
            <person name="Kitamoto K."/>
            <person name="Kobayashi T."/>
            <person name="Konzack S."/>
            <person name="Kulkarni R."/>
            <person name="Kumagai T."/>
            <person name="Lafton A."/>
            <person name="Latge J.-P."/>
            <person name="Li W."/>
            <person name="Lord A."/>
            <person name="Lu C."/>
            <person name="Majoros W.H."/>
            <person name="May G.S."/>
            <person name="Miller B.L."/>
            <person name="Mohamoud Y."/>
            <person name="Molina M."/>
            <person name="Monod M."/>
            <person name="Mouyna I."/>
            <person name="Mulligan S."/>
            <person name="Murphy L.D."/>
            <person name="O'Neil S."/>
            <person name="Paulsen I."/>
            <person name="Penalva M.A."/>
            <person name="Pertea M."/>
            <person name="Price C."/>
            <person name="Pritchard B.L."/>
            <person name="Quail M.A."/>
            <person name="Rabbinowitsch E."/>
            <person name="Rawlins N."/>
            <person name="Rajandream M.A."/>
            <person name="Reichard U."/>
            <person name="Renauld H."/>
            <person name="Robson G.D."/>
            <person name="Rodriguez de Cordoba S."/>
            <person name="Rodriguez-Pena J.M."/>
            <person name="Ronning C.M."/>
            <person name="Rutter S."/>
            <person name="Salzberg S.L."/>
            <person name="Sanchez M."/>
            <person name="Sanchez-Ferrero J.C."/>
            <person name="Saunders D."/>
            <person name="Seeger K."/>
            <person name="Squares R."/>
            <person name="Squares S."/>
            <person name="Takeuchi M."/>
            <person name="Tekaia F."/>
            <person name="Turner G."/>
            <person name="Vazquez de Aldana C.R."/>
            <person name="Weidman J."/>
            <person name="White O."/>
            <person name="Woodward J.R."/>
            <person name="Yu J.-H."/>
            <person name="Fraser C.M."/>
            <person name="Galagan J.E."/>
            <person name="Asai K."/>
            <person name="Machida M."/>
            <person name="Hall N."/>
            <person name="Barrell B.G."/>
            <person name="Denning D.W."/>
        </authorList>
    </citation>
    <scope>NUCLEOTIDE SEQUENCE [LARGE SCALE GENOMIC DNA]</scope>
    <source>
        <strain>ATCC MYA-4609 / CBS 101355 / FGSC A1100 / Af293</strain>
    </source>
</reference>
<comment type="function">
    <text evidence="1">Involved in cytoplasm to vacuole transport (Cvt), pexophagy, mitophagy and nucleophagy. Recruits mitochondria for their selective degradation via autophagy (mitophagy) during starvation. Works as scaffold proteins that recruit ATG proteins to the pre-autophagosome (PAS), the site of vesicle/autophagosome formation. Required for the Cvt vesicles completion (By similarity).</text>
</comment>
<comment type="subunit">
    <text evidence="1">Homodimer.</text>
</comment>
<comment type="subcellular location">
    <subcellularLocation>
        <location evidence="1">Preautophagosomal structure membrane</location>
        <topology evidence="1">Peripheral membrane protein</topology>
    </subcellularLocation>
    <subcellularLocation>
        <location evidence="1">Vacuole membrane</location>
        <topology evidence="1">Peripheral membrane protein</topology>
    </subcellularLocation>
    <text evidence="1">During pexophagy, accumulates in the vacuolar membrane region, where the peroxisomes contact the vacuole.</text>
</comment>
<comment type="similarity">
    <text evidence="4">Belongs to the ATG11 family.</text>
</comment>
<accession>Q4WY31</accession>
<keyword id="KW-0072">Autophagy</keyword>
<keyword id="KW-0175">Coiled coil</keyword>
<keyword id="KW-0472">Membrane</keyword>
<keyword id="KW-0653">Protein transport</keyword>
<keyword id="KW-1185">Reference proteome</keyword>
<keyword id="KW-0813">Transport</keyword>
<keyword id="KW-0926">Vacuole</keyword>
<gene>
    <name type="primary">atg11</name>
    <name type="ORF">AFUA_3G11590</name>
</gene>
<sequence length="1264" mass="143022">MTARGKNVRIQSLATEDEIFVYDRRFVSEPENVELPELPSPEPFTPDTPPDTLTNQNDLQAWRNLYMARRSWALGLVERCGAMDKSIHEHNERTDIIHRAAGVALENLKTHVGNLENRFQEAQTWANDLLKEQRAALDGWQRALTTLESIPAPKVFPFLGRPSTPKEHRDRPTGTLRDFVDANEVQKAGAEAAAESSRFARQIDDVAEAVRGITADTQRLIDDQLPSGADAADGLQEMITFAKKISSDYEHVIALPNNQKTLANISRLALTHTQDLLPSMLDISAEIHAGLEEAVRRHNTAMKVALDHMRTISAIELRLADVQSQIINLNVQSDAFDVVFSVYHMPMVYGSILVESVRRREFNEKMKADSLTLAEEMAVFRDEEQRRRKKWLKSMGDFISLTETTTPGVEINLQGLDYEWPEVSRNDIESYIEHLKSRPAMASLADGLTQQYKDLDAPTRHQRRRAKAFKQGSIFDLSRSSLLLRSDDMLRSLREEKSKLEEKLKGSESRIRKLEDLLHRQSQLSRPVSGNFNLEFPSSPASPYPDELSRRSSVSSRRMSANQSSEDKTLAQRIVTLEAELNAERETVQRLQKEAHAERLSNTDKIQEAQSTKRDLIDNLEARQREFDEERRYLEGELKKYRLRTEELEEELDRITDSRDHAKQDADERINQLETELQNLHIHTEEELHRANDLLEQMQAQKMTEESLQQRINELEKQQSEIKATEQENLQTLQAAFMNLSPGGAVPAEIPSIIKAIEVLSEGLSIHVKNAEEKMAEAVAENKALEERMNQLETEVQDAKQSAEQRESELAQVRGELAQEKEKLAAVQSELHDERSKLNALQSQHADGDTGTDALRQRVVEDERKLGILSQRLAEVEAQARESEKEVCAWKNKLKAISESEREATTRIEIRGSRAKELSQQLFEQVEKMEHMLEQLGFTVIRQDGEIVVQRASKVNASSGIGDSLAQSGVVSVKPDPSLLDWMQAETAQEETDRYMAFLESLYQFDVDVFGDAVVKRVKDIELLARKWQKEARGYRDKYHRMQSEAHDKIAYRSFKEGDLALFLPTRNQAIRSWAAFNVGAPHYFLREQDAHKLQTRDWLLARITKIEERVVDLSKSMNGAHPDRRSIGGTSDAASIDDENPFELSDGLRWYLLDANEEKPGAPATPGLGKSTVAPAHVDARGSIRLKRTSNGGNVAKTLTKSLDSRRNSSSSKKGPPFAISQRANESTAELARPAEANTPLSPSAQEAASTPEEVRRDQLQGP</sequence>
<proteinExistence type="inferred from homology"/>
<dbReference type="EMBL" id="AAHF01000002">
    <property type="protein sequence ID" value="EAL92422.1"/>
    <property type="molecule type" value="Genomic_DNA"/>
</dbReference>
<dbReference type="RefSeq" id="XP_754460.1">
    <property type="nucleotide sequence ID" value="XM_749367.1"/>
</dbReference>
<dbReference type="SMR" id="Q4WY31"/>
<dbReference type="FunCoup" id="Q4WY31">
    <property type="interactions" value="147"/>
</dbReference>
<dbReference type="STRING" id="330879.Q4WY31"/>
<dbReference type="EnsemblFungi" id="EAL92422">
    <property type="protein sequence ID" value="EAL92422"/>
    <property type="gene ID" value="AFUA_3G11590"/>
</dbReference>
<dbReference type="GeneID" id="3512635"/>
<dbReference type="KEGG" id="afm:AFUA_3G11590"/>
<dbReference type="eggNOG" id="ENOG502QVZE">
    <property type="taxonomic scope" value="Eukaryota"/>
</dbReference>
<dbReference type="HOGENOM" id="CLU_002803_1_0_1"/>
<dbReference type="InParanoid" id="Q4WY31"/>
<dbReference type="OMA" id="GLRWYLI"/>
<dbReference type="OrthoDB" id="447953at2759"/>
<dbReference type="Proteomes" id="UP000002530">
    <property type="component" value="Chromosome 3"/>
</dbReference>
<dbReference type="GO" id="GO:1990316">
    <property type="term" value="C:Atg1/ULK1 kinase complex"/>
    <property type="evidence" value="ECO:0000318"/>
    <property type="project" value="GO_Central"/>
</dbReference>
<dbReference type="GO" id="GO:0034045">
    <property type="term" value="C:phagophore assembly site membrane"/>
    <property type="evidence" value="ECO:0000318"/>
    <property type="project" value="GO_Central"/>
</dbReference>
<dbReference type="GO" id="GO:0005774">
    <property type="term" value="C:vacuolar membrane"/>
    <property type="evidence" value="ECO:0007669"/>
    <property type="project" value="UniProtKB-SubCell"/>
</dbReference>
<dbReference type="GO" id="GO:0060090">
    <property type="term" value="F:molecular adaptor activity"/>
    <property type="evidence" value="ECO:0000318"/>
    <property type="project" value="GO_Central"/>
</dbReference>
<dbReference type="GO" id="GO:0019901">
    <property type="term" value="F:protein kinase binding"/>
    <property type="evidence" value="ECO:0000318"/>
    <property type="project" value="GO_Central"/>
</dbReference>
<dbReference type="GO" id="GO:0000045">
    <property type="term" value="P:autophagosome assembly"/>
    <property type="evidence" value="ECO:0000318"/>
    <property type="project" value="GO_Central"/>
</dbReference>
<dbReference type="GO" id="GO:0000422">
    <property type="term" value="P:autophagy of mitochondrion"/>
    <property type="evidence" value="ECO:0000318"/>
    <property type="project" value="GO_Central"/>
</dbReference>
<dbReference type="GO" id="GO:0000425">
    <property type="term" value="P:pexophagy"/>
    <property type="evidence" value="ECO:0000318"/>
    <property type="project" value="GO_Central"/>
</dbReference>
<dbReference type="GO" id="GO:0034727">
    <property type="term" value="P:piecemeal microautophagy of the nucleus"/>
    <property type="evidence" value="ECO:0000318"/>
    <property type="project" value="GO_Central"/>
</dbReference>
<dbReference type="GO" id="GO:0015031">
    <property type="term" value="P:protein transport"/>
    <property type="evidence" value="ECO:0007669"/>
    <property type="project" value="UniProtKB-KW"/>
</dbReference>
<dbReference type="GO" id="GO:0061709">
    <property type="term" value="P:reticulophagy"/>
    <property type="evidence" value="ECO:0000318"/>
    <property type="project" value="GO_Central"/>
</dbReference>
<dbReference type="GO" id="GO:0034517">
    <property type="term" value="P:ribophagy"/>
    <property type="evidence" value="ECO:0000318"/>
    <property type="project" value="GO_Central"/>
</dbReference>
<dbReference type="Gene3D" id="1.10.287.1490">
    <property type="match status" value="1"/>
</dbReference>
<dbReference type="InterPro" id="IPR040040">
    <property type="entry name" value="ATG11"/>
</dbReference>
<dbReference type="InterPro" id="IPR019460">
    <property type="entry name" value="Atg11_C"/>
</dbReference>
<dbReference type="InterPro" id="IPR045326">
    <property type="entry name" value="ATG17-like_dom"/>
</dbReference>
<dbReference type="PANTHER" id="PTHR13222">
    <property type="entry name" value="RB1-INDUCIBLE COILED-COIL"/>
    <property type="match status" value="1"/>
</dbReference>
<dbReference type="PANTHER" id="PTHR13222:SF1">
    <property type="entry name" value="RB1-INDUCIBLE COILED-COIL PROTEIN 1"/>
    <property type="match status" value="1"/>
</dbReference>
<dbReference type="Pfam" id="PF10377">
    <property type="entry name" value="ATG11"/>
    <property type="match status" value="1"/>
</dbReference>
<dbReference type="Pfam" id="PF04108">
    <property type="entry name" value="ATG17_like"/>
    <property type="match status" value="1"/>
</dbReference>
<dbReference type="SUPFAM" id="SSF57997">
    <property type="entry name" value="Tropomyosin"/>
    <property type="match status" value="1"/>
</dbReference>
<name>ATG11_ASPFU</name>